<comment type="function">
    <text evidence="1">Acts as a chaperone.</text>
</comment>
<comment type="induction">
    <text evidence="1">By stress conditions e.g. heat shock.</text>
</comment>
<comment type="similarity">
    <text evidence="1">Belongs to the heat shock protein 70 family.</text>
</comment>
<evidence type="ECO:0000255" key="1">
    <source>
        <dbReference type="HAMAP-Rule" id="MF_00332"/>
    </source>
</evidence>
<evidence type="ECO:0000256" key="2">
    <source>
        <dbReference type="SAM" id="MobiDB-lite"/>
    </source>
</evidence>
<sequence length="611" mass="65303">MSKIIGIDLGTTNSCVSVLEGGEPKVIPNPEGNRTTPSVVAFKNGERQVGEVAKRQSVTNPNTIISIKSKMGTAEKVTVEDKDYTPQEVSAMILQYLKGYAEDYLGEKVTKAVITVPAYFNDAQRQATKDAGKIAGLEVERIINEPTAAALAYGLDKQDQDQKVLVFDLGGGTFDVSILELGDGVFEVLATAGDNKLGGDDFDDAIIEYLVAEFKKENGIDLSKDKMAMQRLKDAAEKAKKDLSGVTSTQISLPFITAGEAGPLHLEISLTRAKFDEITLPLVNRTVGPVRQALSDAGLSTSEIDQVILVGGSTRIPAVQEAVRKETNKEPHRGVNPDEVVAMGAAVQGGVLTGDVKDVVLLDVTPLSLGIETMGGVFTKLIDRNTTIPTSKSQVFSTAADNQPAVDIHVLQGERSMAADNKTLGRFQLADIPPAPRGVPQIEVTFDIDKNGIVSVKAKDLGTNKEQTIVIQSDSGLSEAEIERMVKDAEANADADAKRKEEADLRNEADQLVFQVDKTITDLGEQITEDEKKSVEDARDELKKALEAGELEGIKAAKEKLEGVLQPLVMKVYEQAAAAAQAAQGGEADAGAGKKDDGVVDADFEEVKDDK</sequence>
<reference key="1">
    <citation type="journal article" date="2008" name="J. Bacteriol.">
        <title>Complete genome sequence of the mosquitocidal bacterium Bacillus sphaericus C3-41 and comparison with those of closely related Bacillus species.</title>
        <authorList>
            <person name="Hu X."/>
            <person name="Fan W."/>
            <person name="Han B."/>
            <person name="Liu H."/>
            <person name="Zheng D."/>
            <person name="Li Q."/>
            <person name="Dong W."/>
            <person name="Yan J."/>
            <person name="Gao M."/>
            <person name="Berry C."/>
            <person name="Yuan Z."/>
        </authorList>
    </citation>
    <scope>NUCLEOTIDE SEQUENCE [LARGE SCALE GENOMIC DNA]</scope>
    <source>
        <strain>C3-41</strain>
    </source>
</reference>
<accession>B1HUD1</accession>
<dbReference type="EMBL" id="CP000817">
    <property type="protein sequence ID" value="ACA41276.1"/>
    <property type="molecule type" value="Genomic_DNA"/>
</dbReference>
<dbReference type="RefSeq" id="WP_012295327.1">
    <property type="nucleotide sequence ID" value="NC_010382.1"/>
</dbReference>
<dbReference type="SMR" id="B1HUD1"/>
<dbReference type="EnsemblBacteria" id="ACA41276">
    <property type="protein sequence ID" value="ACA41276"/>
    <property type="gene ID" value="Bsph_3798"/>
</dbReference>
<dbReference type="KEGG" id="lsp:Bsph_3798"/>
<dbReference type="HOGENOM" id="CLU_005965_2_4_9"/>
<dbReference type="Proteomes" id="UP000002164">
    <property type="component" value="Chromosome"/>
</dbReference>
<dbReference type="GO" id="GO:0005524">
    <property type="term" value="F:ATP binding"/>
    <property type="evidence" value="ECO:0007669"/>
    <property type="project" value="UniProtKB-UniRule"/>
</dbReference>
<dbReference type="GO" id="GO:0140662">
    <property type="term" value="F:ATP-dependent protein folding chaperone"/>
    <property type="evidence" value="ECO:0007669"/>
    <property type="project" value="InterPro"/>
</dbReference>
<dbReference type="GO" id="GO:0051082">
    <property type="term" value="F:unfolded protein binding"/>
    <property type="evidence" value="ECO:0007669"/>
    <property type="project" value="InterPro"/>
</dbReference>
<dbReference type="CDD" id="cd10234">
    <property type="entry name" value="ASKHA_NBD_HSP70_DnaK-like"/>
    <property type="match status" value="1"/>
</dbReference>
<dbReference type="FunFam" id="2.60.34.10:FF:000014">
    <property type="entry name" value="Chaperone protein DnaK HSP70"/>
    <property type="match status" value="1"/>
</dbReference>
<dbReference type="FunFam" id="1.20.1270.10:FF:000001">
    <property type="entry name" value="Molecular chaperone DnaK"/>
    <property type="match status" value="1"/>
</dbReference>
<dbReference type="FunFam" id="3.30.420.40:FF:000071">
    <property type="entry name" value="Molecular chaperone DnaK"/>
    <property type="match status" value="1"/>
</dbReference>
<dbReference type="FunFam" id="3.90.640.10:FF:000003">
    <property type="entry name" value="Molecular chaperone DnaK"/>
    <property type="match status" value="1"/>
</dbReference>
<dbReference type="Gene3D" id="1.20.1270.10">
    <property type="match status" value="1"/>
</dbReference>
<dbReference type="Gene3D" id="3.30.420.40">
    <property type="match status" value="2"/>
</dbReference>
<dbReference type="Gene3D" id="3.90.640.10">
    <property type="entry name" value="Actin, Chain A, domain 4"/>
    <property type="match status" value="1"/>
</dbReference>
<dbReference type="Gene3D" id="2.60.34.10">
    <property type="entry name" value="Substrate Binding Domain Of DNAk, Chain A, domain 1"/>
    <property type="match status" value="1"/>
</dbReference>
<dbReference type="HAMAP" id="MF_00332">
    <property type="entry name" value="DnaK"/>
    <property type="match status" value="1"/>
</dbReference>
<dbReference type="InterPro" id="IPR043129">
    <property type="entry name" value="ATPase_NBD"/>
</dbReference>
<dbReference type="InterPro" id="IPR012725">
    <property type="entry name" value="Chaperone_DnaK"/>
</dbReference>
<dbReference type="InterPro" id="IPR018181">
    <property type="entry name" value="Heat_shock_70_CS"/>
</dbReference>
<dbReference type="InterPro" id="IPR029048">
    <property type="entry name" value="HSP70_C_sf"/>
</dbReference>
<dbReference type="InterPro" id="IPR029047">
    <property type="entry name" value="HSP70_peptide-bd_sf"/>
</dbReference>
<dbReference type="InterPro" id="IPR013126">
    <property type="entry name" value="Hsp_70_fam"/>
</dbReference>
<dbReference type="NCBIfam" id="NF001413">
    <property type="entry name" value="PRK00290.1"/>
    <property type="match status" value="1"/>
</dbReference>
<dbReference type="NCBIfam" id="TIGR02350">
    <property type="entry name" value="prok_dnaK"/>
    <property type="match status" value="1"/>
</dbReference>
<dbReference type="PANTHER" id="PTHR19375">
    <property type="entry name" value="HEAT SHOCK PROTEIN 70KDA"/>
    <property type="match status" value="1"/>
</dbReference>
<dbReference type="Pfam" id="PF00012">
    <property type="entry name" value="HSP70"/>
    <property type="match status" value="2"/>
</dbReference>
<dbReference type="PRINTS" id="PR00301">
    <property type="entry name" value="HEATSHOCK70"/>
</dbReference>
<dbReference type="SUPFAM" id="SSF53067">
    <property type="entry name" value="Actin-like ATPase domain"/>
    <property type="match status" value="2"/>
</dbReference>
<dbReference type="SUPFAM" id="SSF100934">
    <property type="entry name" value="Heat shock protein 70kD (HSP70), C-terminal subdomain"/>
    <property type="match status" value="1"/>
</dbReference>
<dbReference type="SUPFAM" id="SSF100920">
    <property type="entry name" value="Heat shock protein 70kD (HSP70), peptide-binding domain"/>
    <property type="match status" value="1"/>
</dbReference>
<dbReference type="PROSITE" id="PS00297">
    <property type="entry name" value="HSP70_1"/>
    <property type="match status" value="1"/>
</dbReference>
<dbReference type="PROSITE" id="PS00329">
    <property type="entry name" value="HSP70_2"/>
    <property type="match status" value="1"/>
</dbReference>
<dbReference type="PROSITE" id="PS01036">
    <property type="entry name" value="HSP70_3"/>
    <property type="match status" value="1"/>
</dbReference>
<proteinExistence type="inferred from homology"/>
<name>DNAK_LYSSC</name>
<keyword id="KW-0067">ATP-binding</keyword>
<keyword id="KW-0143">Chaperone</keyword>
<keyword id="KW-0547">Nucleotide-binding</keyword>
<keyword id="KW-0597">Phosphoprotein</keyword>
<keyword id="KW-0346">Stress response</keyword>
<protein>
    <recommendedName>
        <fullName evidence="1">Chaperone protein DnaK</fullName>
    </recommendedName>
    <alternativeName>
        <fullName evidence="1">HSP70</fullName>
    </alternativeName>
    <alternativeName>
        <fullName evidence="1">Heat shock 70 kDa protein</fullName>
    </alternativeName>
    <alternativeName>
        <fullName evidence="1">Heat shock protein 70</fullName>
    </alternativeName>
</protein>
<feature type="chain" id="PRO_1000119726" description="Chaperone protein DnaK">
    <location>
        <begin position="1"/>
        <end position="611"/>
    </location>
</feature>
<feature type="region of interest" description="Disordered" evidence="2">
    <location>
        <begin position="577"/>
        <end position="611"/>
    </location>
</feature>
<feature type="compositionally biased region" description="Low complexity" evidence="2">
    <location>
        <begin position="577"/>
        <end position="591"/>
    </location>
</feature>
<feature type="compositionally biased region" description="Acidic residues" evidence="2">
    <location>
        <begin position="599"/>
        <end position="611"/>
    </location>
</feature>
<feature type="modified residue" description="Phosphothreonine; by autocatalysis" evidence="1">
    <location>
        <position position="173"/>
    </location>
</feature>
<organism>
    <name type="scientific">Lysinibacillus sphaericus (strain C3-41)</name>
    <dbReference type="NCBI Taxonomy" id="444177"/>
    <lineage>
        <taxon>Bacteria</taxon>
        <taxon>Bacillati</taxon>
        <taxon>Bacillota</taxon>
        <taxon>Bacilli</taxon>
        <taxon>Bacillales</taxon>
        <taxon>Bacillaceae</taxon>
        <taxon>Lysinibacillus</taxon>
    </lineage>
</organism>
<gene>
    <name evidence="1" type="primary">dnaK</name>
    <name type="ordered locus">Bsph_3798</name>
</gene>